<keyword id="KW-0002">3D-structure</keyword>
<keyword id="KW-0472">Membrane</keyword>
<keyword id="KW-0602">Photosynthesis</keyword>
<keyword id="KW-0603">Photosystem I</keyword>
<keyword id="KW-1185">Reference proteome</keyword>
<keyword id="KW-0793">Thylakoid</keyword>
<keyword id="KW-0812">Transmembrane</keyword>
<keyword id="KW-1133">Transmembrane helix</keyword>
<dbReference type="EMBL" id="BA000019">
    <property type="protein sequence ID" value="BAB76356.1"/>
    <property type="status" value="ALT_INIT"/>
    <property type="molecule type" value="Genomic_DNA"/>
</dbReference>
<dbReference type="PIR" id="AI2387">
    <property type="entry name" value="AI2387"/>
</dbReference>
<dbReference type="PDB" id="6JEO">
    <property type="method" value="EM"/>
    <property type="resolution" value="3.30 A"/>
    <property type="chains" value="aM/bM/cM/dM=1-32"/>
</dbReference>
<dbReference type="PDB" id="6K61">
    <property type="method" value="EM"/>
    <property type="resolution" value="2.37 A"/>
    <property type="chains" value="M/m=1-32"/>
</dbReference>
<dbReference type="PDB" id="6TCL">
    <property type="method" value="EM"/>
    <property type="resolution" value="3.20 A"/>
    <property type="chains" value="M/M1/M2/MM=2-32"/>
</dbReference>
<dbReference type="PDB" id="7Y3F">
    <property type="method" value="EM"/>
    <property type="resolution" value="2.62 A"/>
    <property type="chains" value="M=1-32"/>
</dbReference>
<dbReference type="PDBsum" id="6JEO"/>
<dbReference type="PDBsum" id="6K61"/>
<dbReference type="PDBsum" id="6TCL"/>
<dbReference type="PDBsum" id="7Y3F"/>
<dbReference type="EMDB" id="EMD-10461"/>
<dbReference type="EMDB" id="EMD-9807"/>
<dbReference type="EMDB" id="EMD-9918"/>
<dbReference type="SMR" id="Q8YNB0"/>
<dbReference type="STRING" id="103690.gene:10496709"/>
<dbReference type="KEGG" id="ana:asr4657"/>
<dbReference type="Proteomes" id="UP000002483">
    <property type="component" value="Chromosome"/>
</dbReference>
<dbReference type="GO" id="GO:0009522">
    <property type="term" value="C:photosystem I"/>
    <property type="evidence" value="ECO:0007669"/>
    <property type="project" value="UniProtKB-KW"/>
</dbReference>
<dbReference type="GO" id="GO:0031676">
    <property type="term" value="C:plasma membrane-derived thylakoid membrane"/>
    <property type="evidence" value="ECO:0007669"/>
    <property type="project" value="UniProtKB-SubCell"/>
</dbReference>
<dbReference type="GO" id="GO:0015979">
    <property type="term" value="P:photosynthesis"/>
    <property type="evidence" value="ECO:0007669"/>
    <property type="project" value="UniProtKB-UniRule"/>
</dbReference>
<dbReference type="HAMAP" id="MF_00828">
    <property type="entry name" value="PSI_PsaM"/>
    <property type="match status" value="1"/>
</dbReference>
<dbReference type="InterPro" id="IPR010010">
    <property type="entry name" value="PSI_PsaM"/>
</dbReference>
<dbReference type="InterPro" id="IPR037279">
    <property type="entry name" value="PSI_PsaM_sf"/>
</dbReference>
<dbReference type="NCBIfam" id="TIGR03053">
    <property type="entry name" value="PS_I_psaM"/>
    <property type="match status" value="1"/>
</dbReference>
<dbReference type="Pfam" id="PF07465">
    <property type="entry name" value="PsaM"/>
    <property type="match status" value="1"/>
</dbReference>
<dbReference type="SUPFAM" id="SSF81548">
    <property type="entry name" value="Subunit XII of photosystem I reaction centre, PsaM"/>
    <property type="match status" value="1"/>
</dbReference>
<comment type="subcellular location">
    <subcellularLocation>
        <location evidence="1">Cellular thylakoid membrane</location>
        <topology evidence="1">Single-pass membrane protein</topology>
    </subcellularLocation>
</comment>
<comment type="similarity">
    <text evidence="1">Belongs to the PsaM family.</text>
</comment>
<comment type="sequence caution" evidence="2">
    <conflict type="erroneous initiation">
        <sequence resource="EMBL-CDS" id="BAB76356"/>
    </conflict>
    <text>Extended N-terminus.</text>
</comment>
<accession>Q8YNB0</accession>
<gene>
    <name evidence="1" type="primary">psaM</name>
    <name type="ordered locus">asr4657</name>
</gene>
<protein>
    <recommendedName>
        <fullName evidence="1">Photosystem I reaction center subunit XII</fullName>
    </recommendedName>
    <alternativeName>
        <fullName evidence="1">PSI-M</fullName>
    </alternativeName>
</protein>
<reference key="1">
    <citation type="journal article" date="2001" name="DNA Res.">
        <title>Complete genomic sequence of the filamentous nitrogen-fixing cyanobacterium Anabaena sp. strain PCC 7120.</title>
        <authorList>
            <person name="Kaneko T."/>
            <person name="Nakamura Y."/>
            <person name="Wolk C.P."/>
            <person name="Kuritz T."/>
            <person name="Sasamoto S."/>
            <person name="Watanabe A."/>
            <person name="Iriguchi M."/>
            <person name="Ishikawa A."/>
            <person name="Kawashima K."/>
            <person name="Kimura T."/>
            <person name="Kishida Y."/>
            <person name="Kohara M."/>
            <person name="Matsumoto M."/>
            <person name="Matsuno A."/>
            <person name="Muraki A."/>
            <person name="Nakazaki N."/>
            <person name="Shimpo S."/>
            <person name="Sugimoto M."/>
            <person name="Takazawa M."/>
            <person name="Yamada M."/>
            <person name="Yasuda M."/>
            <person name="Tabata S."/>
        </authorList>
    </citation>
    <scope>NUCLEOTIDE SEQUENCE [LARGE SCALE GENOMIC DNA]</scope>
    <source>
        <strain>PCC 7120 / SAG 25.82 / UTEX 2576</strain>
    </source>
</reference>
<evidence type="ECO:0000255" key="1">
    <source>
        <dbReference type="HAMAP-Rule" id="MF_00828"/>
    </source>
</evidence>
<evidence type="ECO:0000305" key="2"/>
<evidence type="ECO:0007829" key="3">
    <source>
        <dbReference type="PDB" id="6K61"/>
    </source>
</evidence>
<name>PSAM_NOSS1</name>
<organism>
    <name type="scientific">Nostoc sp. (strain PCC 7120 / SAG 25.82 / UTEX 2576)</name>
    <dbReference type="NCBI Taxonomy" id="103690"/>
    <lineage>
        <taxon>Bacteria</taxon>
        <taxon>Bacillati</taxon>
        <taxon>Cyanobacteriota</taxon>
        <taxon>Cyanophyceae</taxon>
        <taxon>Nostocales</taxon>
        <taxon>Nostocaceae</taxon>
        <taxon>Nostoc</taxon>
    </lineage>
</organism>
<sequence length="32" mass="3536">MSSISDTQVYIALVVALIPGLLAWRLATELYK</sequence>
<proteinExistence type="evidence at protein level"/>
<feature type="chain" id="PRO_0000277391" description="Photosystem I reaction center subunit XII">
    <location>
        <begin position="1"/>
        <end position="32"/>
    </location>
</feature>
<feature type="transmembrane region" description="Helical" evidence="1">
    <location>
        <begin position="9"/>
        <end position="28"/>
    </location>
</feature>
<feature type="helix" evidence="3">
    <location>
        <begin position="6"/>
        <end position="31"/>
    </location>
</feature>